<accession>B0RTW1</accession>
<gene>
    <name evidence="2" type="primary">dgoD</name>
    <name type="ordered locus">xcc-b100_2515</name>
</gene>
<protein>
    <recommendedName>
        <fullName evidence="2">D-galactonate dehydratase</fullName>
        <shortName evidence="2">GalD</shortName>
        <ecNumber evidence="2">4.2.1.6</ecNumber>
    </recommendedName>
</protein>
<evidence type="ECO:0000250" key="1"/>
<evidence type="ECO:0000255" key="2">
    <source>
        <dbReference type="HAMAP-Rule" id="MF_01289"/>
    </source>
</evidence>
<keyword id="KW-0456">Lyase</keyword>
<keyword id="KW-0460">Magnesium</keyword>
<keyword id="KW-0479">Metal-binding</keyword>
<proteinExistence type="inferred from homology"/>
<sequence>MKITRLTTYHAAPRWLFLKVETDEGITGWGEPVIEGRARSVEAAVHELAGYVVGKDPARINDLWQTMYRAGFYRGGAILMSAIAGIDQALWDIKGKALGVPVYELLGGLVRDRMKTYRWVGGDRPGAIIAQINDYRALGFDTFKFNGTEEMKLIDSARAVDAAVVKVAEIRETFGNSIDFGIDFHGRVGAPMAKALLRELEPFKPLFVEEPVLAEQAEYYPRLAASTCIPLAAGERMFSRFEFKNVLCAGGIGMVQPDLSHAGGITECVKIAAMAEAYDVGFAPHCPLGPIALAACLHVDFVSHNAVLQEQSIGIHYNEGADLLDYVINKEDFHCVDGSIAALPKPGLGVEINEDMLKRANENPPDWRNPVWRHADGSIAEW</sequence>
<feature type="chain" id="PRO_0000352641" description="D-galactonate dehydratase">
    <location>
        <begin position="1"/>
        <end position="382"/>
    </location>
</feature>
<feature type="active site" description="Proton donor" evidence="1">
    <location>
        <position position="185"/>
    </location>
</feature>
<feature type="active site" description="Proton acceptor" evidence="1">
    <location>
        <position position="285"/>
    </location>
</feature>
<feature type="binding site" evidence="2">
    <location>
        <position position="183"/>
    </location>
    <ligand>
        <name>Mg(2+)</name>
        <dbReference type="ChEBI" id="CHEBI:18420"/>
    </ligand>
</feature>
<feature type="binding site" evidence="2">
    <location>
        <position position="209"/>
    </location>
    <ligand>
        <name>Mg(2+)</name>
        <dbReference type="ChEBI" id="CHEBI:18420"/>
    </ligand>
</feature>
<feature type="binding site" evidence="2">
    <location>
        <position position="235"/>
    </location>
    <ligand>
        <name>Mg(2+)</name>
        <dbReference type="ChEBI" id="CHEBI:18420"/>
    </ligand>
</feature>
<feature type="site" description="Increases basicity of active site His" evidence="2">
    <location>
        <position position="258"/>
    </location>
</feature>
<feature type="site" description="Transition state stabilizer" evidence="2">
    <location>
        <position position="310"/>
    </location>
</feature>
<name>DGOD_XANCB</name>
<organism>
    <name type="scientific">Xanthomonas campestris pv. campestris (strain B100)</name>
    <dbReference type="NCBI Taxonomy" id="509169"/>
    <lineage>
        <taxon>Bacteria</taxon>
        <taxon>Pseudomonadati</taxon>
        <taxon>Pseudomonadota</taxon>
        <taxon>Gammaproteobacteria</taxon>
        <taxon>Lysobacterales</taxon>
        <taxon>Lysobacteraceae</taxon>
        <taxon>Xanthomonas</taxon>
    </lineage>
</organism>
<dbReference type="EC" id="4.2.1.6" evidence="2"/>
<dbReference type="EMBL" id="AM920689">
    <property type="protein sequence ID" value="CAP51875.1"/>
    <property type="molecule type" value="Genomic_DNA"/>
</dbReference>
<dbReference type="SMR" id="B0RTW1"/>
<dbReference type="KEGG" id="xca:xcc-b100_2515"/>
<dbReference type="HOGENOM" id="CLU_030273_3_2_6"/>
<dbReference type="UniPathway" id="UPA00081">
    <property type="reaction ID" value="UER00518"/>
</dbReference>
<dbReference type="Proteomes" id="UP000001188">
    <property type="component" value="Chromosome"/>
</dbReference>
<dbReference type="GO" id="GO:0008869">
    <property type="term" value="F:galactonate dehydratase activity"/>
    <property type="evidence" value="ECO:0007669"/>
    <property type="project" value="UniProtKB-UniRule"/>
</dbReference>
<dbReference type="GO" id="GO:0000287">
    <property type="term" value="F:magnesium ion binding"/>
    <property type="evidence" value="ECO:0007669"/>
    <property type="project" value="UniProtKB-UniRule"/>
</dbReference>
<dbReference type="GO" id="GO:0009063">
    <property type="term" value="P:amino acid catabolic process"/>
    <property type="evidence" value="ECO:0007669"/>
    <property type="project" value="InterPro"/>
</dbReference>
<dbReference type="GO" id="GO:0034194">
    <property type="term" value="P:D-galactonate catabolic process"/>
    <property type="evidence" value="ECO:0007669"/>
    <property type="project" value="UniProtKB-UniRule"/>
</dbReference>
<dbReference type="CDD" id="cd03325">
    <property type="entry name" value="D-galactonate_dehydratase"/>
    <property type="match status" value="1"/>
</dbReference>
<dbReference type="FunFam" id="3.30.390.10:FF:000003">
    <property type="entry name" value="D-galactonate dehydratase"/>
    <property type="match status" value="1"/>
</dbReference>
<dbReference type="Gene3D" id="3.20.20.120">
    <property type="entry name" value="Enolase-like C-terminal domain"/>
    <property type="match status" value="1"/>
</dbReference>
<dbReference type="Gene3D" id="3.30.390.10">
    <property type="entry name" value="Enolase-like, N-terminal domain"/>
    <property type="match status" value="1"/>
</dbReference>
<dbReference type="HAMAP" id="MF_01289">
    <property type="entry name" value="Galacton_dehydrat"/>
    <property type="match status" value="1"/>
</dbReference>
<dbReference type="InterPro" id="IPR034593">
    <property type="entry name" value="DgoD-like"/>
</dbReference>
<dbReference type="InterPro" id="IPR036849">
    <property type="entry name" value="Enolase-like_C_sf"/>
</dbReference>
<dbReference type="InterPro" id="IPR029017">
    <property type="entry name" value="Enolase-like_N"/>
</dbReference>
<dbReference type="InterPro" id="IPR029065">
    <property type="entry name" value="Enolase_C-like"/>
</dbReference>
<dbReference type="InterPro" id="IPR023592">
    <property type="entry name" value="Galactonate_deHydtase"/>
</dbReference>
<dbReference type="InterPro" id="IPR018110">
    <property type="entry name" value="Mandel_Rmase/mucon_lact_enz_CS"/>
</dbReference>
<dbReference type="InterPro" id="IPR013342">
    <property type="entry name" value="Mandelate_racemase_C"/>
</dbReference>
<dbReference type="InterPro" id="IPR013341">
    <property type="entry name" value="Mandelate_racemase_N_dom"/>
</dbReference>
<dbReference type="NCBIfam" id="NF010624">
    <property type="entry name" value="PRK14017.1"/>
    <property type="match status" value="1"/>
</dbReference>
<dbReference type="PANTHER" id="PTHR48080:SF2">
    <property type="entry name" value="D-GALACTONATE DEHYDRATASE"/>
    <property type="match status" value="1"/>
</dbReference>
<dbReference type="PANTHER" id="PTHR48080">
    <property type="entry name" value="D-GALACTONATE DEHYDRATASE-RELATED"/>
    <property type="match status" value="1"/>
</dbReference>
<dbReference type="Pfam" id="PF13378">
    <property type="entry name" value="MR_MLE_C"/>
    <property type="match status" value="1"/>
</dbReference>
<dbReference type="Pfam" id="PF02746">
    <property type="entry name" value="MR_MLE_N"/>
    <property type="match status" value="1"/>
</dbReference>
<dbReference type="SFLD" id="SFLDF00003">
    <property type="entry name" value="D-galactonate_dehydratase"/>
    <property type="match status" value="1"/>
</dbReference>
<dbReference type="SFLD" id="SFLDS00001">
    <property type="entry name" value="Enolase"/>
    <property type="match status" value="1"/>
</dbReference>
<dbReference type="SMART" id="SM00922">
    <property type="entry name" value="MR_MLE"/>
    <property type="match status" value="1"/>
</dbReference>
<dbReference type="SUPFAM" id="SSF51604">
    <property type="entry name" value="Enolase C-terminal domain-like"/>
    <property type="match status" value="1"/>
</dbReference>
<dbReference type="SUPFAM" id="SSF54826">
    <property type="entry name" value="Enolase N-terminal domain-like"/>
    <property type="match status" value="1"/>
</dbReference>
<dbReference type="PROSITE" id="PS00908">
    <property type="entry name" value="MR_MLE_1"/>
    <property type="match status" value="1"/>
</dbReference>
<dbReference type="PROSITE" id="PS00909">
    <property type="entry name" value="MR_MLE_2"/>
    <property type="match status" value="1"/>
</dbReference>
<comment type="function">
    <text evidence="2">Catalyzes the dehydration of D-galactonate to 2-keto-3-deoxy-D-galactonate.</text>
</comment>
<comment type="catalytic activity">
    <reaction evidence="2">
        <text>D-galactonate = 2-dehydro-3-deoxy-D-galactonate + H2O</text>
        <dbReference type="Rhea" id="RHEA:18649"/>
        <dbReference type="ChEBI" id="CHEBI:12931"/>
        <dbReference type="ChEBI" id="CHEBI:15377"/>
        <dbReference type="ChEBI" id="CHEBI:57989"/>
        <dbReference type="EC" id="4.2.1.6"/>
    </reaction>
</comment>
<comment type="cofactor">
    <cofactor evidence="2">
        <name>Mg(2+)</name>
        <dbReference type="ChEBI" id="CHEBI:18420"/>
    </cofactor>
    <text evidence="2">Binds 1 Mg(2+) ion per subunit.</text>
</comment>
<comment type="pathway">
    <text evidence="2">Carbohydrate acid metabolism; D-galactonate degradation; D-glyceraldehyde 3-phosphate and pyruvate from D-galactonate: step 1/3.</text>
</comment>
<comment type="miscellaneous">
    <text evidence="2">Reaction proceeds via an anti dehydration.</text>
</comment>
<comment type="similarity">
    <text evidence="2">Belongs to the mandelate racemase/muconate lactonizing enzyme family. GalD subfamily.</text>
</comment>
<reference key="1">
    <citation type="journal article" date="2008" name="J. Biotechnol.">
        <title>The genome of Xanthomonas campestris pv. campestris B100 and its use for the reconstruction of metabolic pathways involved in xanthan biosynthesis.</title>
        <authorList>
            <person name="Vorhoelter F.-J."/>
            <person name="Schneiker S."/>
            <person name="Goesmann A."/>
            <person name="Krause L."/>
            <person name="Bekel T."/>
            <person name="Kaiser O."/>
            <person name="Linke B."/>
            <person name="Patschkowski T."/>
            <person name="Rueckert C."/>
            <person name="Schmid J."/>
            <person name="Sidhu V.K."/>
            <person name="Sieber V."/>
            <person name="Tauch A."/>
            <person name="Watt S.A."/>
            <person name="Weisshaar B."/>
            <person name="Becker A."/>
            <person name="Niehaus K."/>
            <person name="Puehler A."/>
        </authorList>
    </citation>
    <scope>NUCLEOTIDE SEQUENCE [LARGE SCALE GENOMIC DNA]</scope>
    <source>
        <strain>B100</strain>
    </source>
</reference>